<feature type="chain" id="PRO_0000138636" description="Peptide methionine sulfoxide reductase">
    <location>
        <begin position="1"/>
        <end position="196" status="greater than"/>
    </location>
</feature>
<feature type="region of interest" description="Disordered" evidence="2">
    <location>
        <begin position="1"/>
        <end position="23"/>
    </location>
</feature>
<feature type="compositionally biased region" description="Polar residues" evidence="2">
    <location>
        <begin position="1"/>
        <end position="14"/>
    </location>
</feature>
<feature type="non-terminal residue">
    <location>
        <position position="196"/>
    </location>
</feature>
<accession>P54153</accession>
<organism>
    <name type="scientific">Solanum lycopersicum</name>
    <name type="common">Tomato</name>
    <name type="synonym">Lycopersicon esculentum</name>
    <dbReference type="NCBI Taxonomy" id="4081"/>
    <lineage>
        <taxon>Eukaryota</taxon>
        <taxon>Viridiplantae</taxon>
        <taxon>Streptophyta</taxon>
        <taxon>Embryophyta</taxon>
        <taxon>Tracheophyta</taxon>
        <taxon>Spermatophyta</taxon>
        <taxon>Magnoliopsida</taxon>
        <taxon>eudicotyledons</taxon>
        <taxon>Gunneridae</taxon>
        <taxon>Pentapetalae</taxon>
        <taxon>asterids</taxon>
        <taxon>lamiids</taxon>
        <taxon>Solanales</taxon>
        <taxon>Solanaceae</taxon>
        <taxon>Solanoideae</taxon>
        <taxon>Solaneae</taxon>
        <taxon>Solanum</taxon>
        <taxon>Solanum subgen. Lycopersicon</taxon>
    </lineage>
</organism>
<sequence>MEGNNSSSKSTTNPALDPDLDSPDQPGLEFAQFAAGCFWGVELAFQRVGGVVKTEVGYSQGNVHDPNYKLICSGTTEHAEAIRIQFDPNVCPYSNLLSLFWSRHDPTTLNRQGNDVGKQYRSGIYYYNDAQAQLARESLEAKQKEFMDKKIVTEILPAKRFYRAEEYHQQYLEKGGGRGCKQSAAKGCNDPIRCYG</sequence>
<reference key="1">
    <citation type="journal article" date="1989" name="Plant Cell">
        <title>Interaction of a developmentally regulated DNA-binding factor with sites flanking two different fruit-ripening genes from tomato.</title>
        <authorList>
            <person name="Cordes S."/>
            <person name="Deikman J."/>
            <person name="Margossian L.J."/>
            <person name="Fischer R.L."/>
        </authorList>
    </citation>
    <scope>NUCLEOTIDE SEQUENCE [GENOMIC DNA]</scope>
</reference>
<keyword id="KW-0560">Oxidoreductase</keyword>
<keyword id="KW-1185">Reference proteome</keyword>
<gene>
    <name type="primary">E4</name>
</gene>
<protein>
    <recommendedName>
        <fullName>Peptide methionine sulfoxide reductase</fullName>
        <ecNumber>1.8.4.11</ecNumber>
    </recommendedName>
    <alternativeName>
        <fullName>Fruit-ripening protein E4</fullName>
    </alternativeName>
    <alternativeName>
        <fullName>Peptide-methionine (S)-S-oxide reductase</fullName>
        <shortName>Peptide Met(O) reductase</shortName>
    </alternativeName>
    <alternativeName>
        <fullName>Protein-methionine-S-oxide reductase</fullName>
    </alternativeName>
</protein>
<comment type="function">
    <text evidence="1">Has an important function as a repair enzyme for proteins that have been inactivated by oxidation. Catalyzes the reversible oxidation-reduction of methionine sulfoxide in proteins to methionine (By similarity).</text>
</comment>
<comment type="catalytic activity">
    <reaction>
        <text>L-methionyl-[protein] + [thioredoxin]-disulfide + H2O = L-methionyl-(S)-S-oxide-[protein] + [thioredoxin]-dithiol</text>
        <dbReference type="Rhea" id="RHEA:14217"/>
        <dbReference type="Rhea" id="RHEA-COMP:10698"/>
        <dbReference type="Rhea" id="RHEA-COMP:10700"/>
        <dbReference type="Rhea" id="RHEA-COMP:12313"/>
        <dbReference type="Rhea" id="RHEA-COMP:12315"/>
        <dbReference type="ChEBI" id="CHEBI:15377"/>
        <dbReference type="ChEBI" id="CHEBI:16044"/>
        <dbReference type="ChEBI" id="CHEBI:29950"/>
        <dbReference type="ChEBI" id="CHEBI:44120"/>
        <dbReference type="ChEBI" id="CHEBI:50058"/>
        <dbReference type="EC" id="1.8.4.11"/>
    </reaction>
</comment>
<comment type="catalytic activity">
    <reaction>
        <text>[thioredoxin]-disulfide + L-methionine + H2O = L-methionine (S)-S-oxide + [thioredoxin]-dithiol</text>
        <dbReference type="Rhea" id="RHEA:19993"/>
        <dbReference type="Rhea" id="RHEA-COMP:10698"/>
        <dbReference type="Rhea" id="RHEA-COMP:10700"/>
        <dbReference type="ChEBI" id="CHEBI:15377"/>
        <dbReference type="ChEBI" id="CHEBI:29950"/>
        <dbReference type="ChEBI" id="CHEBI:50058"/>
        <dbReference type="ChEBI" id="CHEBI:57844"/>
        <dbReference type="ChEBI" id="CHEBI:58772"/>
        <dbReference type="EC" id="1.8.4.11"/>
    </reaction>
</comment>
<comment type="similarity">
    <text evidence="3">Belongs to the MsrA Met sulfoxide reductase family.</text>
</comment>
<evidence type="ECO:0000250" key="1"/>
<evidence type="ECO:0000256" key="2">
    <source>
        <dbReference type="SAM" id="MobiDB-lite"/>
    </source>
</evidence>
<evidence type="ECO:0000305" key="3"/>
<dbReference type="EC" id="1.8.4.11"/>
<dbReference type="EMBL" id="S44898">
    <property type="protein sequence ID" value="AAB23481.2"/>
    <property type="molecule type" value="Genomic_DNA"/>
</dbReference>
<dbReference type="PIR" id="JQ0988">
    <property type="entry name" value="JQ0988"/>
</dbReference>
<dbReference type="RefSeq" id="NP_001307131.1">
    <property type="nucleotide sequence ID" value="NM_001320202.1"/>
</dbReference>
<dbReference type="SMR" id="P54153"/>
<dbReference type="STRING" id="4081.P54153"/>
<dbReference type="PaxDb" id="4081-Solyc03g111720.2.1"/>
<dbReference type="EnsemblPlants" id="Solyc03g111720.3.1">
    <property type="protein sequence ID" value="Solyc03g111720.3.1"/>
    <property type="gene ID" value="Solyc03g111720.3"/>
</dbReference>
<dbReference type="GeneID" id="101253577"/>
<dbReference type="Gramene" id="Solyc03g111720.3.1">
    <property type="protein sequence ID" value="Solyc03g111720.3.1"/>
    <property type="gene ID" value="Solyc03g111720.3"/>
</dbReference>
<dbReference type="KEGG" id="sly:101253577"/>
<dbReference type="eggNOG" id="KOG1635">
    <property type="taxonomic scope" value="Eukaryota"/>
</dbReference>
<dbReference type="HOGENOM" id="CLU_031040_3_0_1"/>
<dbReference type="InParanoid" id="P54153"/>
<dbReference type="OMA" id="LFWESHD"/>
<dbReference type="OrthoDB" id="77405at2759"/>
<dbReference type="PhylomeDB" id="P54153"/>
<dbReference type="BRENDA" id="1.8.4.11">
    <property type="organism ID" value="3101"/>
</dbReference>
<dbReference type="Proteomes" id="UP000004994">
    <property type="component" value="Chromosome 3"/>
</dbReference>
<dbReference type="GO" id="GO:0005737">
    <property type="term" value="C:cytoplasm"/>
    <property type="evidence" value="ECO:0000318"/>
    <property type="project" value="GO_Central"/>
</dbReference>
<dbReference type="GO" id="GO:0036456">
    <property type="term" value="F:L-methionine-(S)-S-oxide reductase activity"/>
    <property type="evidence" value="ECO:0000318"/>
    <property type="project" value="GO_Central"/>
</dbReference>
<dbReference type="GO" id="GO:0008113">
    <property type="term" value="F:peptide-methionine (S)-S-oxide reductase activity"/>
    <property type="evidence" value="ECO:0000318"/>
    <property type="project" value="GO_Central"/>
</dbReference>
<dbReference type="GO" id="GO:0034599">
    <property type="term" value="P:cellular response to oxidative stress"/>
    <property type="evidence" value="ECO:0000318"/>
    <property type="project" value="GO_Central"/>
</dbReference>
<dbReference type="FunFam" id="3.30.1060.10:FF:000002">
    <property type="entry name" value="Peptide methionine sulfoxide reductase"/>
    <property type="match status" value="1"/>
</dbReference>
<dbReference type="Gene3D" id="3.30.1060.10">
    <property type="entry name" value="Peptide methionine sulphoxide reductase MsrA"/>
    <property type="match status" value="1"/>
</dbReference>
<dbReference type="HAMAP" id="MF_01401">
    <property type="entry name" value="MsrA"/>
    <property type="match status" value="1"/>
</dbReference>
<dbReference type="InterPro" id="IPR002569">
    <property type="entry name" value="Met_Sox_Rdtase_MsrA_dom"/>
</dbReference>
<dbReference type="InterPro" id="IPR036509">
    <property type="entry name" value="Met_Sox_Rdtase_MsrA_sf"/>
</dbReference>
<dbReference type="InterPro" id="IPR050162">
    <property type="entry name" value="MsrA_MetSO_reductase"/>
</dbReference>
<dbReference type="NCBIfam" id="TIGR00401">
    <property type="entry name" value="msrA"/>
    <property type="match status" value="1"/>
</dbReference>
<dbReference type="PANTHER" id="PTHR42799">
    <property type="entry name" value="MITOCHONDRIAL PEPTIDE METHIONINE SULFOXIDE REDUCTASE"/>
    <property type="match status" value="1"/>
</dbReference>
<dbReference type="PANTHER" id="PTHR42799:SF18">
    <property type="entry name" value="PEPTIDE-METHIONINE (S)-S-OXIDE REDUCTASE"/>
    <property type="match status" value="1"/>
</dbReference>
<dbReference type="Pfam" id="PF01625">
    <property type="entry name" value="PMSR"/>
    <property type="match status" value="1"/>
</dbReference>
<dbReference type="SUPFAM" id="SSF55068">
    <property type="entry name" value="Peptide methionine sulfoxide reductase"/>
    <property type="match status" value="1"/>
</dbReference>
<name>MSRA_SOLLC</name>
<proteinExistence type="inferred from homology"/>